<protein>
    <recommendedName>
        <fullName evidence="1">ATP-dependent RNA helicase RhlB</fullName>
        <ecNumber evidence="1">3.6.4.13</ecNumber>
    </recommendedName>
</protein>
<accession>B4TNT3</accession>
<proteinExistence type="inferred from homology"/>
<name>RHLB_SALSV</name>
<reference key="1">
    <citation type="journal article" date="2011" name="J. Bacteriol.">
        <title>Comparative genomics of 28 Salmonella enterica isolates: evidence for CRISPR-mediated adaptive sublineage evolution.</title>
        <authorList>
            <person name="Fricke W.F."/>
            <person name="Mammel M.K."/>
            <person name="McDermott P.F."/>
            <person name="Tartera C."/>
            <person name="White D.G."/>
            <person name="Leclerc J.E."/>
            <person name="Ravel J."/>
            <person name="Cebula T.A."/>
        </authorList>
    </citation>
    <scope>NUCLEOTIDE SEQUENCE [LARGE SCALE GENOMIC DNA]</scope>
    <source>
        <strain>CVM19633</strain>
    </source>
</reference>
<gene>
    <name evidence="1" type="primary">rhlB</name>
    <name type="ordered locus">SeSA_A4126</name>
</gene>
<evidence type="ECO:0000255" key="1">
    <source>
        <dbReference type="HAMAP-Rule" id="MF_00661"/>
    </source>
</evidence>
<evidence type="ECO:0000256" key="2">
    <source>
        <dbReference type="SAM" id="MobiDB-lite"/>
    </source>
</evidence>
<feature type="chain" id="PRO_1000131307" description="ATP-dependent RNA helicase RhlB">
    <location>
        <begin position="1"/>
        <end position="421"/>
    </location>
</feature>
<feature type="domain" description="Helicase ATP-binding" evidence="1">
    <location>
        <begin position="40"/>
        <end position="219"/>
    </location>
</feature>
<feature type="domain" description="Helicase C-terminal" evidence="1">
    <location>
        <begin position="245"/>
        <end position="390"/>
    </location>
</feature>
<feature type="region of interest" description="Disordered" evidence="2">
    <location>
        <begin position="396"/>
        <end position="421"/>
    </location>
</feature>
<feature type="short sequence motif" description="Q motif">
    <location>
        <begin position="9"/>
        <end position="37"/>
    </location>
</feature>
<feature type="short sequence motif" description="DEAD box">
    <location>
        <begin position="165"/>
        <end position="168"/>
    </location>
</feature>
<feature type="compositionally biased region" description="Low complexity" evidence="2">
    <location>
        <begin position="402"/>
        <end position="414"/>
    </location>
</feature>
<feature type="binding site" evidence="1">
    <location>
        <begin position="53"/>
        <end position="60"/>
    </location>
    <ligand>
        <name>ATP</name>
        <dbReference type="ChEBI" id="CHEBI:30616"/>
    </ligand>
</feature>
<dbReference type="EC" id="3.6.4.13" evidence="1"/>
<dbReference type="EMBL" id="CP001127">
    <property type="protein sequence ID" value="ACF92097.1"/>
    <property type="molecule type" value="Genomic_DNA"/>
</dbReference>
<dbReference type="RefSeq" id="WP_000047525.1">
    <property type="nucleotide sequence ID" value="NC_011094.1"/>
</dbReference>
<dbReference type="SMR" id="B4TNT3"/>
<dbReference type="KEGG" id="sew:SeSA_A4126"/>
<dbReference type="HOGENOM" id="CLU_003041_1_3_6"/>
<dbReference type="Proteomes" id="UP000001865">
    <property type="component" value="Chromosome"/>
</dbReference>
<dbReference type="GO" id="GO:0005829">
    <property type="term" value="C:cytosol"/>
    <property type="evidence" value="ECO:0007669"/>
    <property type="project" value="TreeGrafter"/>
</dbReference>
<dbReference type="GO" id="GO:0005524">
    <property type="term" value="F:ATP binding"/>
    <property type="evidence" value="ECO:0007669"/>
    <property type="project" value="UniProtKB-UniRule"/>
</dbReference>
<dbReference type="GO" id="GO:0016887">
    <property type="term" value="F:ATP hydrolysis activity"/>
    <property type="evidence" value="ECO:0007669"/>
    <property type="project" value="RHEA"/>
</dbReference>
<dbReference type="GO" id="GO:0003723">
    <property type="term" value="F:RNA binding"/>
    <property type="evidence" value="ECO:0007669"/>
    <property type="project" value="UniProtKB-UniRule"/>
</dbReference>
<dbReference type="GO" id="GO:0003724">
    <property type="term" value="F:RNA helicase activity"/>
    <property type="evidence" value="ECO:0007669"/>
    <property type="project" value="UniProtKB-UniRule"/>
</dbReference>
<dbReference type="GO" id="GO:0006401">
    <property type="term" value="P:RNA catabolic process"/>
    <property type="evidence" value="ECO:0007669"/>
    <property type="project" value="UniProtKB-UniRule"/>
</dbReference>
<dbReference type="CDD" id="cd00268">
    <property type="entry name" value="DEADc"/>
    <property type="match status" value="1"/>
</dbReference>
<dbReference type="CDD" id="cd18787">
    <property type="entry name" value="SF2_C_DEAD"/>
    <property type="match status" value="1"/>
</dbReference>
<dbReference type="FunFam" id="3.40.50.300:FF:000008">
    <property type="entry name" value="ATP-dependent RNA helicase RhlB"/>
    <property type="match status" value="1"/>
</dbReference>
<dbReference type="FunFam" id="3.40.50.300:FF:000312">
    <property type="entry name" value="ATP-dependent RNA helicase RhlB"/>
    <property type="match status" value="1"/>
</dbReference>
<dbReference type="Gene3D" id="3.40.50.300">
    <property type="entry name" value="P-loop containing nucleotide triphosphate hydrolases"/>
    <property type="match status" value="2"/>
</dbReference>
<dbReference type="HAMAP" id="MF_00661">
    <property type="entry name" value="DEAD_helicase_RhlB"/>
    <property type="match status" value="1"/>
</dbReference>
<dbReference type="InterPro" id="IPR011545">
    <property type="entry name" value="DEAD/DEAH_box_helicase_dom"/>
</dbReference>
<dbReference type="InterPro" id="IPR050079">
    <property type="entry name" value="DEAD_box_RNA_helicase"/>
</dbReference>
<dbReference type="InterPro" id="IPR014001">
    <property type="entry name" value="Helicase_ATP-bd"/>
</dbReference>
<dbReference type="InterPro" id="IPR001650">
    <property type="entry name" value="Helicase_C-like"/>
</dbReference>
<dbReference type="InterPro" id="IPR027417">
    <property type="entry name" value="P-loop_NTPase"/>
</dbReference>
<dbReference type="InterPro" id="IPR000629">
    <property type="entry name" value="RNA-helicase_DEAD-box_CS"/>
</dbReference>
<dbReference type="InterPro" id="IPR023554">
    <property type="entry name" value="RNA_helicase_ATP-dep_RhlB"/>
</dbReference>
<dbReference type="InterPro" id="IPR014014">
    <property type="entry name" value="RNA_helicase_DEAD_Q_motif"/>
</dbReference>
<dbReference type="NCBIfam" id="NF003419">
    <property type="entry name" value="PRK04837.1"/>
    <property type="match status" value="1"/>
</dbReference>
<dbReference type="PANTHER" id="PTHR47959:SF10">
    <property type="entry name" value="ATP-DEPENDENT RNA HELICASE RHLB"/>
    <property type="match status" value="1"/>
</dbReference>
<dbReference type="PANTHER" id="PTHR47959">
    <property type="entry name" value="ATP-DEPENDENT RNA HELICASE RHLE-RELATED"/>
    <property type="match status" value="1"/>
</dbReference>
<dbReference type="Pfam" id="PF00270">
    <property type="entry name" value="DEAD"/>
    <property type="match status" value="1"/>
</dbReference>
<dbReference type="Pfam" id="PF00271">
    <property type="entry name" value="Helicase_C"/>
    <property type="match status" value="1"/>
</dbReference>
<dbReference type="SMART" id="SM00487">
    <property type="entry name" value="DEXDc"/>
    <property type="match status" value="1"/>
</dbReference>
<dbReference type="SMART" id="SM00490">
    <property type="entry name" value="HELICc"/>
    <property type="match status" value="1"/>
</dbReference>
<dbReference type="SUPFAM" id="SSF52540">
    <property type="entry name" value="P-loop containing nucleoside triphosphate hydrolases"/>
    <property type="match status" value="1"/>
</dbReference>
<dbReference type="PROSITE" id="PS00039">
    <property type="entry name" value="DEAD_ATP_HELICASE"/>
    <property type="match status" value="1"/>
</dbReference>
<dbReference type="PROSITE" id="PS51192">
    <property type="entry name" value="HELICASE_ATP_BIND_1"/>
    <property type="match status" value="1"/>
</dbReference>
<dbReference type="PROSITE" id="PS51194">
    <property type="entry name" value="HELICASE_CTER"/>
    <property type="match status" value="1"/>
</dbReference>
<dbReference type="PROSITE" id="PS51195">
    <property type="entry name" value="Q_MOTIF"/>
    <property type="match status" value="1"/>
</dbReference>
<comment type="function">
    <text evidence="1">DEAD-box RNA helicase involved in RNA degradation. Has RNA-dependent ATPase activity and unwinds double-stranded RNA.</text>
</comment>
<comment type="catalytic activity">
    <reaction evidence="1">
        <text>ATP + H2O = ADP + phosphate + H(+)</text>
        <dbReference type="Rhea" id="RHEA:13065"/>
        <dbReference type="ChEBI" id="CHEBI:15377"/>
        <dbReference type="ChEBI" id="CHEBI:15378"/>
        <dbReference type="ChEBI" id="CHEBI:30616"/>
        <dbReference type="ChEBI" id="CHEBI:43474"/>
        <dbReference type="ChEBI" id="CHEBI:456216"/>
        <dbReference type="EC" id="3.6.4.13"/>
    </reaction>
</comment>
<comment type="subunit">
    <text evidence="1">Component of the RNA degradosome, which is a multiprotein complex involved in RNA processing and mRNA degradation.</text>
</comment>
<comment type="subcellular location">
    <subcellularLocation>
        <location evidence="1">Cytoplasm</location>
    </subcellularLocation>
</comment>
<comment type="similarity">
    <text evidence="1">Belongs to the DEAD box helicase family. RhlB subfamily.</text>
</comment>
<organism>
    <name type="scientific">Salmonella schwarzengrund (strain CVM19633)</name>
    <dbReference type="NCBI Taxonomy" id="439843"/>
    <lineage>
        <taxon>Bacteria</taxon>
        <taxon>Pseudomonadati</taxon>
        <taxon>Pseudomonadota</taxon>
        <taxon>Gammaproteobacteria</taxon>
        <taxon>Enterobacterales</taxon>
        <taxon>Enterobacteriaceae</taxon>
        <taxon>Salmonella</taxon>
    </lineage>
</organism>
<sequence>MSKTHLTEQKFSDFALHPQVVEALEKKGFYNCTPIQALALPLTLAGRDVAGQAQTGTGKTMAFLTSTFHYLLSHPAIDDRKVNQPRALIMAPTRELAVQIHADAEPLAQATGLKLGLAYGGDGYDKQLKVLESGVDILIGTTGRLIDYAKQNHINLGAIQVVVLDEADRMYDLGFIKDIRWLFRRMPPAAQRLNMLFSATLSYRVRELAFEQMNNAEYVEVEPEQKTGHRIKEELFYPSNEEKMRLLQTLIEEEWPDRAIIFANTKHRCEDIWGHLAADGHRVGLLTGDVAQKKRLRILDEFTRGDLDILVATDVAARGLHIPAVTHVFNYDLPDDCEDYVHRIGRTGRAGASGHSISLACEEYALNLPAIESYIGHSIPVSKYNPEALMNDLPKPLRLTRSRPGNGPRRAGAPRNRRRSG</sequence>
<keyword id="KW-0067">ATP-binding</keyword>
<keyword id="KW-0963">Cytoplasm</keyword>
<keyword id="KW-0347">Helicase</keyword>
<keyword id="KW-0378">Hydrolase</keyword>
<keyword id="KW-0547">Nucleotide-binding</keyword>
<keyword id="KW-0694">RNA-binding</keyword>